<accession>Q5XIA8</accession>
<keyword id="KW-0053">Apoptosis</keyword>
<keyword id="KW-0472">Membrane</keyword>
<keyword id="KW-0496">Mitochondrion</keyword>
<keyword id="KW-0999">Mitochondrion inner membrane</keyword>
<keyword id="KW-1185">Reference proteome</keyword>
<keyword id="KW-0809">Transit peptide</keyword>
<keyword id="KW-0812">Transmembrane</keyword>
<keyword id="KW-1133">Transmembrane helix</keyword>
<comment type="function">
    <text evidence="1">Plays an important role in maintenance of mitochondrial morphology and in mediating either calcium or potassium/proton antiport (By similarity). Mediates proton-dependent calcium efflux from mitochondrion (By similarity). Also functions as an electroneutral mitochondrial proton/potassium exchanger (By similarity). Required for the mitochondrial tubular network and cristae organization (By similarity). Involved in apoptotic release of cytochrome c (By similarity). Inhibits AFG3L2 proteolytic activity, stimulating respiration and stabilizing respiratory enzymes in actively respiring mitochondria (By similarity). However, when mitochondria become hyperpolarized, GHITM loses its inhibitory activity toward AFG3L2 and the now active AFG3L2 turns first on GHITM and, if hyperpolarization persists, on other proteins of the mitochondria, leading to a broad remodeling of the proteome (By similarity).</text>
</comment>
<comment type="subunit">
    <text evidence="1">Interacts with LETM1 and AFG3L2.</text>
</comment>
<comment type="subcellular location">
    <subcellularLocation>
        <location evidence="1">Mitochondrion inner membrane</location>
        <topology evidence="2">Multi-pass membrane protein</topology>
    </subcellularLocation>
</comment>
<comment type="PTM">
    <text evidence="1">Undergoes AFG3L2-mediated proteolytic degradation, upon hyperpolarization of mitochondria.</text>
</comment>
<comment type="similarity">
    <text evidence="3">Belongs to the BI1 family.</text>
</comment>
<evidence type="ECO:0000250" key="1">
    <source>
        <dbReference type="UniProtKB" id="Q9H3K2"/>
    </source>
</evidence>
<evidence type="ECO:0000255" key="2"/>
<evidence type="ECO:0000305" key="3"/>
<reference key="1">
    <citation type="journal article" date="2004" name="Genome Res.">
        <title>The status, quality, and expansion of the NIH full-length cDNA project: the Mammalian Gene Collection (MGC).</title>
        <authorList>
            <consortium name="The MGC Project Team"/>
        </authorList>
    </citation>
    <scope>NUCLEOTIDE SEQUENCE [LARGE SCALE MRNA]</scope>
    <source>
        <tissue>Heart</tissue>
    </source>
</reference>
<gene>
    <name type="primary">Ghitm</name>
    <name type="synonym">Mics1</name>
</gene>
<sequence length="346" mass="37178">MLAARLVCLRTLPSRVFQPTFITKASPLVKNSITKNQWLLTPSREYATKTRIRTHRGKTGQELKEAALEPSLEKVFKIDQMGKWFVAGGAAVGLGALCYYGLGMSNEIGAIEKAVIWPQYVKDRIHSTYMYLAGSIGLTALSALALARSPALMNFMMTGSWMTIGATFAAMIGAGMLVQSISYEQSPGPKHLAWMLHSGVMGAVVAPLTILGGPLLLRAAWYTAGIVGGLSTVAMCAPSEKFLNMGAPLGVGLGLVFASSLGSMFLPPTSVAGATLYSVAMYGGLVLFSMFLLYDTQKVVKRAEITPAYGAQKYDPINSMLTIYMDTLNIFMRVATMLATGSNRKK</sequence>
<protein>
    <recommendedName>
        <fullName>Growth hormone-inducible transmembrane protein</fullName>
    </recommendedName>
    <alternativeName>
        <fullName>Mitochondrial morphology and cristae structure 1</fullName>
        <shortName>MICS1</shortName>
    </alternativeName>
</protein>
<name>GHITM_RAT</name>
<feature type="transit peptide" description="Mitochondrion" evidence="3">
    <location>
        <begin position="1"/>
        <end position="45"/>
    </location>
</feature>
<feature type="chain" id="PRO_0000402543" description="Growth hormone-inducible transmembrane protein">
    <location>
        <begin position="46"/>
        <end position="346"/>
    </location>
</feature>
<feature type="topological domain" description="Mitochondrial matrix" evidence="2">
    <location>
        <begin position="46"/>
        <end position="83"/>
    </location>
</feature>
<feature type="transmembrane region" description="Helical" evidence="2">
    <location>
        <begin position="84"/>
        <end position="104"/>
    </location>
</feature>
<feature type="topological domain" description="Mitochondrial intermembrane" evidence="2">
    <location>
        <begin position="105"/>
        <end position="126"/>
    </location>
</feature>
<feature type="transmembrane region" description="Helical" evidence="2">
    <location>
        <begin position="127"/>
        <end position="147"/>
    </location>
</feature>
<feature type="topological domain" description="Mitochondrial matrix" evidence="2">
    <location>
        <begin position="148"/>
        <end position="160"/>
    </location>
</feature>
<feature type="transmembrane region" description="Helical" evidence="2">
    <location>
        <begin position="161"/>
        <end position="181"/>
    </location>
</feature>
<feature type="topological domain" description="Mitochondrial intermembrane" evidence="2">
    <location>
        <begin position="182"/>
        <end position="191"/>
    </location>
</feature>
<feature type="transmembrane region" description="Helical" evidence="2">
    <location>
        <begin position="192"/>
        <end position="212"/>
    </location>
</feature>
<feature type="topological domain" description="Mitochondrial matrix" evidence="2">
    <location>
        <begin position="213"/>
        <end position="214"/>
    </location>
</feature>
<feature type="transmembrane region" description="Helical" evidence="2">
    <location>
        <begin position="215"/>
        <end position="235"/>
    </location>
</feature>
<feature type="topological domain" description="Mitochondrial intermembrane" evidence="2">
    <location>
        <begin position="236"/>
        <end position="245"/>
    </location>
</feature>
<feature type="transmembrane region" description="Helical" evidence="2">
    <location>
        <begin position="246"/>
        <end position="266"/>
    </location>
</feature>
<feature type="topological domain" description="Mitochondrial matrix" evidence="2">
    <location>
        <begin position="267"/>
        <end position="272"/>
    </location>
</feature>
<feature type="transmembrane region" description="Helical" evidence="2">
    <location>
        <begin position="273"/>
        <end position="293"/>
    </location>
</feature>
<feature type="topological domain" description="Mitochondrial intermembrane" evidence="2">
    <location>
        <begin position="294"/>
        <end position="346"/>
    </location>
</feature>
<dbReference type="EMBL" id="BC083778">
    <property type="protein sequence ID" value="AAH83778.1"/>
    <property type="molecule type" value="mRNA"/>
</dbReference>
<dbReference type="RefSeq" id="NP_001005908.1">
    <property type="nucleotide sequence ID" value="NM_001005908.1"/>
</dbReference>
<dbReference type="RefSeq" id="XP_006252848.1">
    <property type="nucleotide sequence ID" value="XM_006252786.4"/>
</dbReference>
<dbReference type="FunCoup" id="Q5XIA8">
    <property type="interactions" value="818"/>
</dbReference>
<dbReference type="STRING" id="10116.ENSRNOP00000018723"/>
<dbReference type="PhosphoSitePlus" id="Q5XIA8"/>
<dbReference type="SwissPalm" id="Q5XIA8"/>
<dbReference type="PaxDb" id="10116-ENSRNOP00000018723"/>
<dbReference type="Ensembl" id="ENSRNOT00000106368.1">
    <property type="protein sequence ID" value="ENSRNOP00000077387.1"/>
    <property type="gene ID" value="ENSRNOG00000013961.7"/>
</dbReference>
<dbReference type="GeneID" id="290596"/>
<dbReference type="KEGG" id="rno:290596"/>
<dbReference type="UCSC" id="RGD:1359301">
    <property type="organism name" value="rat"/>
</dbReference>
<dbReference type="AGR" id="RGD:1359301"/>
<dbReference type="CTD" id="27069"/>
<dbReference type="RGD" id="1359301">
    <property type="gene designation" value="Ghitm"/>
</dbReference>
<dbReference type="eggNOG" id="KOG1630">
    <property type="taxonomic scope" value="Eukaryota"/>
</dbReference>
<dbReference type="GeneTree" id="ENSGT01050000244940"/>
<dbReference type="HOGENOM" id="CLU_050797_1_0_1"/>
<dbReference type="InParanoid" id="Q5XIA8"/>
<dbReference type="OMA" id="TLMWSER"/>
<dbReference type="OrthoDB" id="6285520at2759"/>
<dbReference type="PhylomeDB" id="Q5XIA8"/>
<dbReference type="TreeFam" id="TF314017"/>
<dbReference type="PRO" id="PR:Q5XIA8"/>
<dbReference type="Proteomes" id="UP000002494">
    <property type="component" value="Chromosome 16"/>
</dbReference>
<dbReference type="Bgee" id="ENSRNOG00000013961">
    <property type="expression patterns" value="Expressed in heart and 19 other cell types or tissues"/>
</dbReference>
<dbReference type="GO" id="GO:0005789">
    <property type="term" value="C:endoplasmic reticulum membrane"/>
    <property type="evidence" value="ECO:0000266"/>
    <property type="project" value="RGD"/>
</dbReference>
<dbReference type="GO" id="GO:0005743">
    <property type="term" value="C:mitochondrial inner membrane"/>
    <property type="evidence" value="ECO:0000266"/>
    <property type="project" value="RGD"/>
</dbReference>
<dbReference type="GO" id="GO:0031966">
    <property type="term" value="C:mitochondrial membrane"/>
    <property type="evidence" value="ECO:0000266"/>
    <property type="project" value="RGD"/>
</dbReference>
<dbReference type="GO" id="GO:0005262">
    <property type="term" value="F:calcium channel activity"/>
    <property type="evidence" value="ECO:0000318"/>
    <property type="project" value="GO_Central"/>
</dbReference>
<dbReference type="GO" id="GO:0015369">
    <property type="term" value="F:calcium:proton antiporter activity"/>
    <property type="evidence" value="ECO:0000250"/>
    <property type="project" value="UniProtKB"/>
</dbReference>
<dbReference type="GO" id="GO:0006915">
    <property type="term" value="P:apoptotic process"/>
    <property type="evidence" value="ECO:0007669"/>
    <property type="project" value="UniProtKB-KW"/>
</dbReference>
<dbReference type="GO" id="GO:0099093">
    <property type="term" value="P:calcium export from the mitochondrion"/>
    <property type="evidence" value="ECO:0000250"/>
    <property type="project" value="UniProtKB"/>
</dbReference>
<dbReference type="GO" id="GO:0006816">
    <property type="term" value="P:calcium ion transport"/>
    <property type="evidence" value="ECO:0000250"/>
    <property type="project" value="UniProtKB"/>
</dbReference>
<dbReference type="GO" id="GO:0007007">
    <property type="term" value="P:inner mitochondrial membrane organization"/>
    <property type="evidence" value="ECO:0000250"/>
    <property type="project" value="UniProtKB"/>
</dbReference>
<dbReference type="GO" id="GO:0006851">
    <property type="term" value="P:mitochondrial calcium ion transmembrane transport"/>
    <property type="evidence" value="ECO:0000250"/>
    <property type="project" value="UniProtKB"/>
</dbReference>
<dbReference type="GO" id="GO:0140141">
    <property type="term" value="P:mitochondrial potassium ion transmembrane transport"/>
    <property type="evidence" value="ECO:0000250"/>
    <property type="project" value="UniProtKB"/>
</dbReference>
<dbReference type="GO" id="GO:0090201">
    <property type="term" value="P:negative regulation of release of cytochrome c from mitochondria"/>
    <property type="evidence" value="ECO:0000266"/>
    <property type="project" value="RGD"/>
</dbReference>
<dbReference type="CDD" id="cd10431">
    <property type="entry name" value="GHITM"/>
    <property type="match status" value="1"/>
</dbReference>
<dbReference type="InterPro" id="IPR006214">
    <property type="entry name" value="Bax_inhibitor_1-related"/>
</dbReference>
<dbReference type="InterPro" id="IPR035871">
    <property type="entry name" value="GHITM"/>
</dbReference>
<dbReference type="PANTHER" id="PTHR23291">
    <property type="entry name" value="BAX INHIBITOR-RELATED"/>
    <property type="match status" value="1"/>
</dbReference>
<dbReference type="PANTHER" id="PTHR23291:SF112">
    <property type="entry name" value="GROWTH HORMONE-INDUCIBLE TRANSMEMBRANE PROTEIN"/>
    <property type="match status" value="1"/>
</dbReference>
<dbReference type="Pfam" id="PF01027">
    <property type="entry name" value="Bax1-I"/>
    <property type="match status" value="1"/>
</dbReference>
<proteinExistence type="evidence at transcript level"/>
<organism>
    <name type="scientific">Rattus norvegicus</name>
    <name type="common">Rat</name>
    <dbReference type="NCBI Taxonomy" id="10116"/>
    <lineage>
        <taxon>Eukaryota</taxon>
        <taxon>Metazoa</taxon>
        <taxon>Chordata</taxon>
        <taxon>Craniata</taxon>
        <taxon>Vertebrata</taxon>
        <taxon>Euteleostomi</taxon>
        <taxon>Mammalia</taxon>
        <taxon>Eutheria</taxon>
        <taxon>Euarchontoglires</taxon>
        <taxon>Glires</taxon>
        <taxon>Rodentia</taxon>
        <taxon>Myomorpha</taxon>
        <taxon>Muroidea</taxon>
        <taxon>Muridae</taxon>
        <taxon>Murinae</taxon>
        <taxon>Rattus</taxon>
    </lineage>
</organism>